<reference key="1">
    <citation type="journal article" date="2004" name="Science">
        <title>The Ashbya gossypii genome as a tool for mapping the ancient Saccharomyces cerevisiae genome.</title>
        <authorList>
            <person name="Dietrich F.S."/>
            <person name="Voegeli S."/>
            <person name="Brachat S."/>
            <person name="Lerch A."/>
            <person name="Gates K."/>
            <person name="Steiner S."/>
            <person name="Mohr C."/>
            <person name="Poehlmann R."/>
            <person name="Luedi P."/>
            <person name="Choi S."/>
            <person name="Wing R.A."/>
            <person name="Flavier A."/>
            <person name="Gaffney T.D."/>
            <person name="Philippsen P."/>
        </authorList>
    </citation>
    <scope>NUCLEOTIDE SEQUENCE [LARGE SCALE GENOMIC DNA]</scope>
    <source>
        <strain>ATCC 10895 / CBS 109.51 / FGSC 9923 / NRRL Y-1056</strain>
    </source>
</reference>
<reference key="2">
    <citation type="journal article" date="2013" name="G3 (Bethesda)">
        <title>Genomes of Ashbya fungi isolated from insects reveal four mating-type loci, numerous translocations, lack of transposons, and distinct gene duplications.</title>
        <authorList>
            <person name="Dietrich F.S."/>
            <person name="Voegeli S."/>
            <person name="Kuo S."/>
            <person name="Philippsen P."/>
        </authorList>
    </citation>
    <scope>GENOME REANNOTATION</scope>
    <scope>SEQUENCE REVISION TO 183-184; 186; 204; 210; 215-216; 223; 229; 233; 237 AND 245</scope>
    <source>
        <strain>ATCC 10895 / CBS 109.51 / FGSC 9923 / NRRL Y-1056</strain>
    </source>
</reference>
<protein>
    <recommendedName>
        <fullName>Mitochondrial import inner membrane translocase subunit TIM50</fullName>
    </recommendedName>
</protein>
<feature type="transit peptide" description="Mitochondrion" evidence="2">
    <location>
        <begin position="1"/>
        <end position="9"/>
    </location>
</feature>
<feature type="chain" id="PRO_0000043125" description="Mitochondrial import inner membrane translocase subunit TIM50">
    <location>
        <begin position="10"/>
        <end position="476"/>
    </location>
</feature>
<feature type="topological domain" description="Mitochondrial matrix" evidence="2">
    <location>
        <begin position="10"/>
        <end position="110"/>
    </location>
</feature>
<feature type="transmembrane region" description="Helical" evidence="2">
    <location>
        <begin position="111"/>
        <end position="130"/>
    </location>
</feature>
<feature type="topological domain" description="Mitochondrial intermembrane" evidence="2">
    <location>
        <begin position="131"/>
        <end position="476"/>
    </location>
</feature>
<feature type="domain" description="FCP1 homology" evidence="3">
    <location>
        <begin position="186"/>
        <end position="329"/>
    </location>
</feature>
<feature type="region of interest" description="Disordered" evidence="4">
    <location>
        <begin position="40"/>
        <end position="103"/>
    </location>
</feature>
<feature type="region of interest" description="Disordered" evidence="4">
    <location>
        <begin position="435"/>
        <end position="455"/>
    </location>
</feature>
<feature type="compositionally biased region" description="Basic and acidic residues" evidence="4">
    <location>
        <begin position="40"/>
        <end position="50"/>
    </location>
</feature>
<feature type="compositionally biased region" description="Basic and acidic residues" evidence="4">
    <location>
        <begin position="66"/>
        <end position="85"/>
    </location>
</feature>
<gene>
    <name type="primary">TIM50</name>
    <name type="ordered locus">ADR045W</name>
</gene>
<dbReference type="EMBL" id="AE016817">
    <property type="protein sequence ID" value="AAS51965.2"/>
    <property type="molecule type" value="Genomic_DNA"/>
</dbReference>
<dbReference type="RefSeq" id="NP_984141.2">
    <property type="nucleotide sequence ID" value="NM_209494.2"/>
</dbReference>
<dbReference type="SMR" id="Q75A73"/>
<dbReference type="FunCoup" id="Q75A73">
    <property type="interactions" value="490"/>
</dbReference>
<dbReference type="STRING" id="284811.Q75A73"/>
<dbReference type="EnsemblFungi" id="AAS51965">
    <property type="protein sequence ID" value="AAS51965"/>
    <property type="gene ID" value="AGOS_ADR045W"/>
</dbReference>
<dbReference type="GeneID" id="4620290"/>
<dbReference type="KEGG" id="ago:AGOS_ADR045W"/>
<dbReference type="eggNOG" id="KOG2832">
    <property type="taxonomic scope" value="Eukaryota"/>
</dbReference>
<dbReference type="HOGENOM" id="CLU_023309_1_2_1"/>
<dbReference type="InParanoid" id="Q75A73"/>
<dbReference type="OMA" id="RDRSEYV"/>
<dbReference type="OrthoDB" id="287041at2759"/>
<dbReference type="Proteomes" id="UP000000591">
    <property type="component" value="Chromosome IV"/>
</dbReference>
<dbReference type="GO" id="GO:0005744">
    <property type="term" value="C:TIM23 mitochondrial import inner membrane translocase complex"/>
    <property type="evidence" value="ECO:0000318"/>
    <property type="project" value="GO_Central"/>
</dbReference>
<dbReference type="GO" id="GO:0042802">
    <property type="term" value="F:identical protein binding"/>
    <property type="evidence" value="ECO:0007669"/>
    <property type="project" value="EnsemblFungi"/>
</dbReference>
<dbReference type="GO" id="GO:0030943">
    <property type="term" value="F:mitochondrion targeting sequence binding"/>
    <property type="evidence" value="ECO:0007669"/>
    <property type="project" value="EnsemblFungi"/>
</dbReference>
<dbReference type="GO" id="GO:0008320">
    <property type="term" value="F:protein transmembrane transporter activity"/>
    <property type="evidence" value="ECO:0007669"/>
    <property type="project" value="EnsemblFungi"/>
</dbReference>
<dbReference type="GO" id="GO:0030150">
    <property type="term" value="P:protein import into mitochondrial matrix"/>
    <property type="evidence" value="ECO:0000318"/>
    <property type="project" value="GO_Central"/>
</dbReference>
<dbReference type="GO" id="GO:0046902">
    <property type="term" value="P:regulation of mitochondrial membrane permeability"/>
    <property type="evidence" value="ECO:0007669"/>
    <property type="project" value="EnsemblFungi"/>
</dbReference>
<dbReference type="CDD" id="cd07521">
    <property type="entry name" value="HAD_FCP1-like"/>
    <property type="match status" value="1"/>
</dbReference>
<dbReference type="FunFam" id="3.40.50.1000:FF:000019">
    <property type="entry name" value="Mitochondrial import inner membrane translocase subunit TIM50"/>
    <property type="match status" value="1"/>
</dbReference>
<dbReference type="Gene3D" id="3.40.50.1000">
    <property type="entry name" value="HAD superfamily/HAD-like"/>
    <property type="match status" value="1"/>
</dbReference>
<dbReference type="InterPro" id="IPR004274">
    <property type="entry name" value="FCP1_dom"/>
</dbReference>
<dbReference type="InterPro" id="IPR036412">
    <property type="entry name" value="HAD-like_sf"/>
</dbReference>
<dbReference type="InterPro" id="IPR023214">
    <property type="entry name" value="HAD_sf"/>
</dbReference>
<dbReference type="InterPro" id="IPR050365">
    <property type="entry name" value="TIM50"/>
</dbReference>
<dbReference type="PANTHER" id="PTHR12210">
    <property type="entry name" value="DULLARD PROTEIN PHOSPHATASE"/>
    <property type="match status" value="1"/>
</dbReference>
<dbReference type="Pfam" id="PF03031">
    <property type="entry name" value="NIF"/>
    <property type="match status" value="1"/>
</dbReference>
<dbReference type="SMART" id="SM00577">
    <property type="entry name" value="CPDc"/>
    <property type="match status" value="1"/>
</dbReference>
<dbReference type="SUPFAM" id="SSF56784">
    <property type="entry name" value="HAD-like"/>
    <property type="match status" value="1"/>
</dbReference>
<dbReference type="PROSITE" id="PS50969">
    <property type="entry name" value="FCP1"/>
    <property type="match status" value="1"/>
</dbReference>
<accession>Q75A73</accession>
<comment type="function">
    <text evidence="1">Essential component of the TIM23 complex, a complex that mediates the translocation of transit peptide-containing proteins across the mitochondrial inner membrane. Required to direct preproteins in transit and direct them to the channel protein TIM23, and possibly facilitates transfer of the translocating proteins from the TOM complex to the TIM23 complex (By similarity).</text>
</comment>
<comment type="subunit">
    <text evidence="1">Component of the TIM23 complex, at least composed of TIM23, TIM17, TIM50 and TIM21. Interacts with preproteins in transit (By similarity).</text>
</comment>
<comment type="subcellular location">
    <subcellularLocation>
        <location evidence="1">Mitochondrion inner membrane</location>
        <topology evidence="1">Single-pass membrane protein</topology>
    </subcellularLocation>
</comment>
<comment type="similarity">
    <text evidence="5">Belongs to the TIM50 family.</text>
</comment>
<evidence type="ECO:0000250" key="1"/>
<evidence type="ECO:0000255" key="2"/>
<evidence type="ECO:0000255" key="3">
    <source>
        <dbReference type="PROSITE-ProRule" id="PRU00336"/>
    </source>
</evidence>
<evidence type="ECO:0000256" key="4">
    <source>
        <dbReference type="SAM" id="MobiDB-lite"/>
    </source>
</evidence>
<evidence type="ECO:0000305" key="5"/>
<keyword id="KW-0472">Membrane</keyword>
<keyword id="KW-0496">Mitochondrion</keyword>
<keyword id="KW-0999">Mitochondrion inner membrane</keyword>
<keyword id="KW-0653">Protein transport</keyword>
<keyword id="KW-1185">Reference proteome</keyword>
<keyword id="KW-0809">Transit peptide</keyword>
<keyword id="KW-0811">Translocation</keyword>
<keyword id="KW-0812">Transmembrane</keyword>
<keyword id="KW-1133">Transmembrane helix</keyword>
<keyword id="KW-0813">Transport</keyword>
<name>TIM50_EREGS</name>
<sequence>MLHVIRRSRATSARQLPRVAGLLAGAAAVRSRTYIGTRILHEEQKPKKPEPPNSILTEDMLARAGVDAERGPETEKAPAEDKAGESTETGSGAGKKKRARKTTTEIKRERYANLFYLFSLTGLAGGAVYMSRDWDADEPEEERKGIENGYTPGLMYRRFKARFDSLFTFFQEPPYPDLLPPPPPPPYQRPLTLVLPLEDFFVHSEWTQQHGWRTAKRPGADYFLGYLSQYYEIVLFSSNYMVYSEKVVEKLDPIRAFITYNLFKDHCVYKDGIHIKDLSHLNRDLGKTLIIDTDPNSVKLQMENAILAEPWDGKADDALLRYIPFLEYLVTQPINDVRPILNSFKDRHHIPEEFAERVEKLRAKFNADQKAKAGSGLSFLLNPGMASKPAKFPLDLIREEGEKNYVRFMKLIEEEKEKLKLQQEHMSAPTFTLKDMAEGNMPTPEEQMKMQLQKQKEFEELYEKEKQKMQQQTKGQ</sequence>
<organism>
    <name type="scientific">Eremothecium gossypii (strain ATCC 10895 / CBS 109.51 / FGSC 9923 / NRRL Y-1056)</name>
    <name type="common">Yeast</name>
    <name type="synonym">Ashbya gossypii</name>
    <dbReference type="NCBI Taxonomy" id="284811"/>
    <lineage>
        <taxon>Eukaryota</taxon>
        <taxon>Fungi</taxon>
        <taxon>Dikarya</taxon>
        <taxon>Ascomycota</taxon>
        <taxon>Saccharomycotina</taxon>
        <taxon>Saccharomycetes</taxon>
        <taxon>Saccharomycetales</taxon>
        <taxon>Saccharomycetaceae</taxon>
        <taxon>Eremothecium</taxon>
    </lineage>
</organism>
<proteinExistence type="inferred from homology"/>